<reference key="1">
    <citation type="journal article" date="2001" name="Microb. Drug Resist.">
        <title>Annotated draft genomic sequence from a Streptococcus pneumoniae type 19F clinical isolate.</title>
        <authorList>
            <person name="Dopazo J."/>
            <person name="Mendoza A."/>
            <person name="Herrero J."/>
            <person name="Caldara F."/>
            <person name="Humbert Y."/>
            <person name="Friedli L."/>
            <person name="Guerrier M."/>
            <person name="Grand-Schenk E."/>
            <person name="Gandin C."/>
            <person name="de Francesco M."/>
            <person name="Polissi A."/>
            <person name="Buell G."/>
            <person name="Feger G."/>
            <person name="Garcia E."/>
            <person name="Peitsch M."/>
            <person name="Garcia-Bustos J.F."/>
        </authorList>
    </citation>
    <scope>NUCLEOTIDE SEQUENCE [LARGE SCALE GENOMIC DNA]</scope>
    <source>
        <strain>G54</strain>
    </source>
</reference>
<reference key="2">
    <citation type="submission" date="2008-03" db="EMBL/GenBank/DDBJ databases">
        <title>Pneumococcal beta glucoside metabolism investigated by whole genome comparison.</title>
        <authorList>
            <person name="Mulas L."/>
            <person name="Trappetti C."/>
            <person name="Hakenbeck R."/>
            <person name="Iannelli F."/>
            <person name="Pozzi G."/>
            <person name="Davidsen T.M."/>
            <person name="Tettelin H."/>
            <person name="Oggioni M."/>
        </authorList>
    </citation>
    <scope>NUCLEOTIDE SEQUENCE [LARGE SCALE GENOMIC DNA]</scope>
    <source>
        <strain>G54</strain>
    </source>
</reference>
<gene>
    <name evidence="1" type="primary">rsmG</name>
    <name type="ordered locus">SPG_1179</name>
</gene>
<accession>B5E522</accession>
<name>RSMG_STRP4</name>
<organism>
    <name type="scientific">Streptococcus pneumoniae serotype 19F (strain G54)</name>
    <dbReference type="NCBI Taxonomy" id="512566"/>
    <lineage>
        <taxon>Bacteria</taxon>
        <taxon>Bacillati</taxon>
        <taxon>Bacillota</taxon>
        <taxon>Bacilli</taxon>
        <taxon>Lactobacillales</taxon>
        <taxon>Streptococcaceae</taxon>
        <taxon>Streptococcus</taxon>
    </lineage>
</organism>
<dbReference type="EC" id="2.1.1.-" evidence="1"/>
<dbReference type="EMBL" id="CP001015">
    <property type="protein sequence ID" value="ACF55685.1"/>
    <property type="molecule type" value="Genomic_DNA"/>
</dbReference>
<dbReference type="SMR" id="B5E522"/>
<dbReference type="KEGG" id="spx:SPG_1179"/>
<dbReference type="HOGENOM" id="CLU_065341_0_2_9"/>
<dbReference type="GO" id="GO:0005829">
    <property type="term" value="C:cytosol"/>
    <property type="evidence" value="ECO:0007669"/>
    <property type="project" value="TreeGrafter"/>
</dbReference>
<dbReference type="GO" id="GO:0070043">
    <property type="term" value="F:rRNA (guanine-N7-)-methyltransferase activity"/>
    <property type="evidence" value="ECO:0007669"/>
    <property type="project" value="UniProtKB-UniRule"/>
</dbReference>
<dbReference type="CDD" id="cd02440">
    <property type="entry name" value="AdoMet_MTases"/>
    <property type="match status" value="1"/>
</dbReference>
<dbReference type="FunFam" id="3.40.50.150:FF:000041">
    <property type="entry name" value="Ribosomal RNA small subunit methyltransferase G"/>
    <property type="match status" value="1"/>
</dbReference>
<dbReference type="Gene3D" id="3.40.50.150">
    <property type="entry name" value="Vaccinia Virus protein VP39"/>
    <property type="match status" value="1"/>
</dbReference>
<dbReference type="HAMAP" id="MF_00074">
    <property type="entry name" value="16SrRNA_methyltr_G"/>
    <property type="match status" value="1"/>
</dbReference>
<dbReference type="InterPro" id="IPR003682">
    <property type="entry name" value="rRNA_ssu_MeTfrase_G"/>
</dbReference>
<dbReference type="InterPro" id="IPR029063">
    <property type="entry name" value="SAM-dependent_MTases_sf"/>
</dbReference>
<dbReference type="NCBIfam" id="TIGR00138">
    <property type="entry name" value="rsmG_gidB"/>
    <property type="match status" value="1"/>
</dbReference>
<dbReference type="PANTHER" id="PTHR31760">
    <property type="entry name" value="S-ADENOSYL-L-METHIONINE-DEPENDENT METHYLTRANSFERASES SUPERFAMILY PROTEIN"/>
    <property type="match status" value="1"/>
</dbReference>
<dbReference type="PANTHER" id="PTHR31760:SF0">
    <property type="entry name" value="S-ADENOSYL-L-METHIONINE-DEPENDENT METHYLTRANSFERASES SUPERFAMILY PROTEIN"/>
    <property type="match status" value="1"/>
</dbReference>
<dbReference type="Pfam" id="PF02527">
    <property type="entry name" value="GidB"/>
    <property type="match status" value="1"/>
</dbReference>
<dbReference type="PIRSF" id="PIRSF003078">
    <property type="entry name" value="GidB"/>
    <property type="match status" value="1"/>
</dbReference>
<dbReference type="SUPFAM" id="SSF53335">
    <property type="entry name" value="S-adenosyl-L-methionine-dependent methyltransferases"/>
    <property type="match status" value="1"/>
</dbReference>
<feature type="chain" id="PRO_1000092657" description="Ribosomal RNA small subunit methyltransferase G">
    <location>
        <begin position="1"/>
        <end position="237"/>
    </location>
</feature>
<feature type="region of interest" description="Disordered" evidence="2">
    <location>
        <begin position="218"/>
        <end position="237"/>
    </location>
</feature>
<feature type="binding site" evidence="1">
    <location>
        <position position="78"/>
    </location>
    <ligand>
        <name>S-adenosyl-L-methionine</name>
        <dbReference type="ChEBI" id="CHEBI:59789"/>
    </ligand>
</feature>
<feature type="binding site" evidence="1">
    <location>
        <position position="83"/>
    </location>
    <ligand>
        <name>S-adenosyl-L-methionine</name>
        <dbReference type="ChEBI" id="CHEBI:59789"/>
    </ligand>
</feature>
<feature type="binding site" evidence="1">
    <location>
        <begin position="129"/>
        <end position="130"/>
    </location>
    <ligand>
        <name>S-adenosyl-L-methionine</name>
        <dbReference type="ChEBI" id="CHEBI:59789"/>
    </ligand>
</feature>
<feature type="binding site" evidence="1">
    <location>
        <position position="148"/>
    </location>
    <ligand>
        <name>S-adenosyl-L-methionine</name>
        <dbReference type="ChEBI" id="CHEBI:59789"/>
    </ligand>
</feature>
<keyword id="KW-0963">Cytoplasm</keyword>
<keyword id="KW-0489">Methyltransferase</keyword>
<keyword id="KW-0698">rRNA processing</keyword>
<keyword id="KW-0949">S-adenosyl-L-methionine</keyword>
<keyword id="KW-0808">Transferase</keyword>
<comment type="function">
    <text evidence="1">Specifically methylates the N7 position of a guanine in 16S rRNA.</text>
</comment>
<comment type="subcellular location">
    <subcellularLocation>
        <location evidence="1">Cytoplasm</location>
    </subcellularLocation>
</comment>
<comment type="similarity">
    <text evidence="1">Belongs to the methyltransferase superfamily. RNA methyltransferase RsmG family.</text>
</comment>
<evidence type="ECO:0000255" key="1">
    <source>
        <dbReference type="HAMAP-Rule" id="MF_00074"/>
    </source>
</evidence>
<evidence type="ECO:0000256" key="2">
    <source>
        <dbReference type="SAM" id="MobiDB-lite"/>
    </source>
</evidence>
<protein>
    <recommendedName>
        <fullName evidence="1">Ribosomal RNA small subunit methyltransferase G</fullName>
        <ecNumber evidence="1">2.1.1.-</ecNumber>
    </recommendedName>
    <alternativeName>
        <fullName evidence="1">16S rRNA 7-methylguanosine methyltransferase</fullName>
        <shortName evidence="1">16S rRNA m7G methyltransferase</shortName>
    </alternativeName>
</protein>
<proteinExistence type="inferred from homology"/>
<sequence length="237" mass="27198">MKPKTFYNLLAEQNLPLSDQQKEQFERYFELLVEWNEKINLTAITDKEEVYLKHFYDSIAPILQGLIPNETIKLLDIGAGAGFPSLPMKILYPELDVTIIDSLNKRINFLQLLAQELDLNGVHFYHGRAEDFAQDKNFRAQYDFVTARAVARMQVLSELTIPYLKVGGKLLALKASNAPEELLEAKNALNLLFSKVEDNLSYALPNRDPRYITVVEKKKETPNKYPRKAGMPNKRPL</sequence>